<comment type="catalytic activity">
    <reaction evidence="1">
        <text>5-amino-1-(5-phospho-D-ribosyl)imidazole-4-carboxylate + L-aspartate + ATP = (2S)-2-[5-amino-1-(5-phospho-beta-D-ribosyl)imidazole-4-carboxamido]succinate + ADP + phosphate + 2 H(+)</text>
        <dbReference type="Rhea" id="RHEA:22628"/>
        <dbReference type="ChEBI" id="CHEBI:15378"/>
        <dbReference type="ChEBI" id="CHEBI:29991"/>
        <dbReference type="ChEBI" id="CHEBI:30616"/>
        <dbReference type="ChEBI" id="CHEBI:43474"/>
        <dbReference type="ChEBI" id="CHEBI:58443"/>
        <dbReference type="ChEBI" id="CHEBI:77657"/>
        <dbReference type="ChEBI" id="CHEBI:456216"/>
        <dbReference type="EC" id="6.3.2.6"/>
    </reaction>
</comment>
<comment type="pathway">
    <text evidence="1">Purine metabolism; IMP biosynthesis via de novo pathway; 5-amino-1-(5-phospho-D-ribosyl)imidazole-4-carboxamide from 5-amino-1-(5-phospho-D-ribosyl)imidazole-4-carboxylate: step 1/2.</text>
</comment>
<comment type="similarity">
    <text evidence="1">Belongs to the SAICAR synthetase family.</text>
</comment>
<keyword id="KW-0067">ATP-binding</keyword>
<keyword id="KW-0436">Ligase</keyword>
<keyword id="KW-0547">Nucleotide-binding</keyword>
<keyword id="KW-0658">Purine biosynthesis</keyword>
<name>PUR7_ACIBY</name>
<sequence length="239" mass="26958">MLKQTLLYTGKAKSVYETDNADHLILVFRDDASAFNGEKIEQLDRKGKVNNRFNAFIMEKLAEAGIETHFEKLLSPTEVLVKKLQMIPVECVIRNYAAGSLCRRLGVEEGKELTPPTFELFYKDDGLGDPMVNESQAIALGWATAEQLEQMKVLTYKVNDVLKALFAEGNMILVDFKLEFGVFHDRIVLGDEFSPDGCRLWDKDTKKKLDKDRFRQGLGGVVEAYEEVAARLGVDLSDI</sequence>
<gene>
    <name evidence="1" type="primary">purC</name>
    <name type="ordered locus">ABAYE0056</name>
</gene>
<feature type="chain" id="PRO_1000095960" description="Phosphoribosylaminoimidazole-succinocarboxamide synthase">
    <location>
        <begin position="1"/>
        <end position="239"/>
    </location>
</feature>
<accession>B0VA00</accession>
<protein>
    <recommendedName>
        <fullName evidence="1">Phosphoribosylaminoimidazole-succinocarboxamide synthase</fullName>
        <ecNumber evidence="1">6.3.2.6</ecNumber>
    </recommendedName>
    <alternativeName>
        <fullName evidence="1">SAICAR synthetase</fullName>
    </alternativeName>
</protein>
<reference key="1">
    <citation type="journal article" date="2008" name="PLoS ONE">
        <title>Comparative analysis of Acinetobacters: three genomes for three lifestyles.</title>
        <authorList>
            <person name="Vallenet D."/>
            <person name="Nordmann P."/>
            <person name="Barbe V."/>
            <person name="Poirel L."/>
            <person name="Mangenot S."/>
            <person name="Bataille E."/>
            <person name="Dossat C."/>
            <person name="Gas S."/>
            <person name="Kreimeyer A."/>
            <person name="Lenoble P."/>
            <person name="Oztas S."/>
            <person name="Poulain J."/>
            <person name="Segurens B."/>
            <person name="Robert C."/>
            <person name="Abergel C."/>
            <person name="Claverie J.-M."/>
            <person name="Raoult D."/>
            <person name="Medigue C."/>
            <person name="Weissenbach J."/>
            <person name="Cruveiller S."/>
        </authorList>
    </citation>
    <scope>NUCLEOTIDE SEQUENCE [LARGE SCALE GENOMIC DNA]</scope>
    <source>
        <strain>AYE</strain>
    </source>
</reference>
<proteinExistence type="inferred from homology"/>
<organism>
    <name type="scientific">Acinetobacter baumannii (strain AYE)</name>
    <dbReference type="NCBI Taxonomy" id="509173"/>
    <lineage>
        <taxon>Bacteria</taxon>
        <taxon>Pseudomonadati</taxon>
        <taxon>Pseudomonadota</taxon>
        <taxon>Gammaproteobacteria</taxon>
        <taxon>Moraxellales</taxon>
        <taxon>Moraxellaceae</taxon>
        <taxon>Acinetobacter</taxon>
        <taxon>Acinetobacter calcoaceticus/baumannii complex</taxon>
    </lineage>
</organism>
<dbReference type="EC" id="6.3.2.6" evidence="1"/>
<dbReference type="EMBL" id="CU459141">
    <property type="protein sequence ID" value="CAM85045.1"/>
    <property type="molecule type" value="Genomic_DNA"/>
</dbReference>
<dbReference type="RefSeq" id="WP_000917863.1">
    <property type="nucleotide sequence ID" value="NZ_JBDGFB010000004.1"/>
</dbReference>
<dbReference type="SMR" id="B0VA00"/>
<dbReference type="EnsemblBacteria" id="CAM85045">
    <property type="protein sequence ID" value="CAM85045"/>
    <property type="gene ID" value="ABAYE0056"/>
</dbReference>
<dbReference type="GeneID" id="92895662"/>
<dbReference type="KEGG" id="aby:ABAYE0056"/>
<dbReference type="HOGENOM" id="CLU_061495_2_0_6"/>
<dbReference type="UniPathway" id="UPA00074">
    <property type="reaction ID" value="UER00131"/>
</dbReference>
<dbReference type="GO" id="GO:0005829">
    <property type="term" value="C:cytosol"/>
    <property type="evidence" value="ECO:0007669"/>
    <property type="project" value="TreeGrafter"/>
</dbReference>
<dbReference type="GO" id="GO:0005524">
    <property type="term" value="F:ATP binding"/>
    <property type="evidence" value="ECO:0007669"/>
    <property type="project" value="UniProtKB-KW"/>
</dbReference>
<dbReference type="GO" id="GO:0004639">
    <property type="term" value="F:phosphoribosylaminoimidazolesuccinocarboxamide synthase activity"/>
    <property type="evidence" value="ECO:0007669"/>
    <property type="project" value="UniProtKB-UniRule"/>
</dbReference>
<dbReference type="GO" id="GO:0006189">
    <property type="term" value="P:'de novo' IMP biosynthetic process"/>
    <property type="evidence" value="ECO:0007669"/>
    <property type="project" value="UniProtKB-UniRule"/>
</dbReference>
<dbReference type="GO" id="GO:0009236">
    <property type="term" value="P:cobalamin biosynthetic process"/>
    <property type="evidence" value="ECO:0007669"/>
    <property type="project" value="InterPro"/>
</dbReference>
<dbReference type="CDD" id="cd01415">
    <property type="entry name" value="SAICAR_synt_PurC"/>
    <property type="match status" value="1"/>
</dbReference>
<dbReference type="FunFam" id="3.30.200.20:FF:000086">
    <property type="entry name" value="Phosphoribosylaminoimidazole-succinocarboxamide synthase"/>
    <property type="match status" value="1"/>
</dbReference>
<dbReference type="FunFam" id="3.30.470.20:FF:000006">
    <property type="entry name" value="Phosphoribosylaminoimidazole-succinocarboxamide synthase"/>
    <property type="match status" value="1"/>
</dbReference>
<dbReference type="Gene3D" id="3.30.470.20">
    <property type="entry name" value="ATP-grasp fold, B domain"/>
    <property type="match status" value="1"/>
</dbReference>
<dbReference type="Gene3D" id="3.30.200.20">
    <property type="entry name" value="Phosphorylase Kinase, domain 1"/>
    <property type="match status" value="1"/>
</dbReference>
<dbReference type="HAMAP" id="MF_00137">
    <property type="entry name" value="SAICAR_synth"/>
    <property type="match status" value="1"/>
</dbReference>
<dbReference type="InterPro" id="IPR028923">
    <property type="entry name" value="SAICAR_synt/ADE2_N"/>
</dbReference>
<dbReference type="InterPro" id="IPR033934">
    <property type="entry name" value="SAICAR_synt_PurC"/>
</dbReference>
<dbReference type="InterPro" id="IPR001636">
    <property type="entry name" value="SAICAR_synth"/>
</dbReference>
<dbReference type="InterPro" id="IPR050089">
    <property type="entry name" value="SAICAR_synthetase"/>
</dbReference>
<dbReference type="InterPro" id="IPR018236">
    <property type="entry name" value="SAICAR_synthetase_CS"/>
</dbReference>
<dbReference type="NCBIfam" id="TIGR00081">
    <property type="entry name" value="purC"/>
    <property type="match status" value="1"/>
</dbReference>
<dbReference type="PANTHER" id="PTHR43599">
    <property type="entry name" value="MULTIFUNCTIONAL PROTEIN ADE2"/>
    <property type="match status" value="1"/>
</dbReference>
<dbReference type="PANTHER" id="PTHR43599:SF3">
    <property type="entry name" value="SI:DKEY-6E2.2"/>
    <property type="match status" value="1"/>
</dbReference>
<dbReference type="Pfam" id="PF01259">
    <property type="entry name" value="SAICAR_synt"/>
    <property type="match status" value="1"/>
</dbReference>
<dbReference type="SUPFAM" id="SSF56104">
    <property type="entry name" value="SAICAR synthase-like"/>
    <property type="match status" value="1"/>
</dbReference>
<dbReference type="PROSITE" id="PS01057">
    <property type="entry name" value="SAICAR_SYNTHETASE_1"/>
    <property type="match status" value="1"/>
</dbReference>
<dbReference type="PROSITE" id="PS01058">
    <property type="entry name" value="SAICAR_SYNTHETASE_2"/>
    <property type="match status" value="1"/>
</dbReference>
<evidence type="ECO:0000255" key="1">
    <source>
        <dbReference type="HAMAP-Rule" id="MF_00137"/>
    </source>
</evidence>